<evidence type="ECO:0000255" key="1">
    <source>
        <dbReference type="HAMAP-Rule" id="MF_01147"/>
    </source>
</evidence>
<sequence>MSNSYLAFPKFDPVIFSIGPVSLHWYGLMYLVGFVFAMWLAVRRANKPGSGWTKEEVENLLYAGFLGVFIGGRVGYVLFYNLPMFLDNPLYLFKVWDGGMSFHGGLIGVICVMLWFARRTKRNFFQVADFIAPLIPFGLGAGRLGNFINAELWGRVTTDTPWAMLFPTSRNTDIAIVAADPAKWQAIFNQYGVLPRHPSQLYEMILEGVVLFIILNVFIRKPRPMGSVSGLFLIGYGTFRIIVECFRQPDEQLGLFEGMISMGQILSVPMILAGIIMMIWAYRRPTQKLS</sequence>
<organism>
    <name type="scientific">Yersinia pestis bv. Antiqua (strain Angola)</name>
    <dbReference type="NCBI Taxonomy" id="349746"/>
    <lineage>
        <taxon>Bacteria</taxon>
        <taxon>Pseudomonadati</taxon>
        <taxon>Pseudomonadota</taxon>
        <taxon>Gammaproteobacteria</taxon>
        <taxon>Enterobacterales</taxon>
        <taxon>Yersiniaceae</taxon>
        <taxon>Yersinia</taxon>
    </lineage>
</organism>
<reference key="1">
    <citation type="journal article" date="2010" name="J. Bacteriol.">
        <title>Genome sequence of the deep-rooted Yersinia pestis strain Angola reveals new insights into the evolution and pangenome of the plague bacterium.</title>
        <authorList>
            <person name="Eppinger M."/>
            <person name="Worsham P.L."/>
            <person name="Nikolich M.P."/>
            <person name="Riley D.R."/>
            <person name="Sebastian Y."/>
            <person name="Mou S."/>
            <person name="Achtman M."/>
            <person name="Lindler L.E."/>
            <person name="Ravel J."/>
        </authorList>
    </citation>
    <scope>NUCLEOTIDE SEQUENCE [LARGE SCALE GENOMIC DNA]</scope>
    <source>
        <strain>Angola</strain>
    </source>
</reference>
<feature type="chain" id="PRO_1000137477" description="Phosphatidylglycerol--prolipoprotein diacylglyceryl transferase">
    <location>
        <begin position="1"/>
        <end position="290"/>
    </location>
</feature>
<feature type="transmembrane region" description="Helical" evidence="1">
    <location>
        <begin position="21"/>
        <end position="41"/>
    </location>
</feature>
<feature type="transmembrane region" description="Helical" evidence="1">
    <location>
        <begin position="60"/>
        <end position="80"/>
    </location>
</feature>
<feature type="transmembrane region" description="Helical" evidence="1">
    <location>
        <begin position="96"/>
        <end position="116"/>
    </location>
</feature>
<feature type="transmembrane region" description="Helical" evidence="1">
    <location>
        <begin position="124"/>
        <end position="144"/>
    </location>
</feature>
<feature type="transmembrane region" description="Helical" evidence="1">
    <location>
        <begin position="199"/>
        <end position="219"/>
    </location>
</feature>
<feature type="transmembrane region" description="Helical" evidence="1">
    <location>
        <begin position="226"/>
        <end position="246"/>
    </location>
</feature>
<feature type="transmembrane region" description="Helical" evidence="1">
    <location>
        <begin position="260"/>
        <end position="280"/>
    </location>
</feature>
<feature type="binding site" evidence="1">
    <location>
        <position position="143"/>
    </location>
    <ligand>
        <name>a 1,2-diacyl-sn-glycero-3-phospho-(1'-sn-glycerol)</name>
        <dbReference type="ChEBI" id="CHEBI:64716"/>
    </ligand>
</feature>
<proteinExistence type="inferred from homology"/>
<protein>
    <recommendedName>
        <fullName evidence="1">Phosphatidylglycerol--prolipoprotein diacylglyceryl transferase</fullName>
        <ecNumber evidence="1">2.5.1.145</ecNumber>
    </recommendedName>
</protein>
<accession>A9R2R4</accession>
<comment type="function">
    <text evidence="1">Catalyzes the transfer of the diacylglyceryl group from phosphatidylglycerol to the sulfhydryl group of the N-terminal cysteine of a prolipoprotein, the first step in the formation of mature lipoproteins.</text>
</comment>
<comment type="catalytic activity">
    <reaction evidence="1">
        <text>L-cysteinyl-[prolipoprotein] + a 1,2-diacyl-sn-glycero-3-phospho-(1'-sn-glycerol) = an S-1,2-diacyl-sn-glyceryl-L-cysteinyl-[prolipoprotein] + sn-glycerol 1-phosphate + H(+)</text>
        <dbReference type="Rhea" id="RHEA:56712"/>
        <dbReference type="Rhea" id="RHEA-COMP:14679"/>
        <dbReference type="Rhea" id="RHEA-COMP:14680"/>
        <dbReference type="ChEBI" id="CHEBI:15378"/>
        <dbReference type="ChEBI" id="CHEBI:29950"/>
        <dbReference type="ChEBI" id="CHEBI:57685"/>
        <dbReference type="ChEBI" id="CHEBI:64716"/>
        <dbReference type="ChEBI" id="CHEBI:140658"/>
        <dbReference type="EC" id="2.5.1.145"/>
    </reaction>
</comment>
<comment type="pathway">
    <text evidence="1">Protein modification; lipoprotein biosynthesis (diacylglyceryl transfer).</text>
</comment>
<comment type="subcellular location">
    <subcellularLocation>
        <location evidence="1">Cell inner membrane</location>
        <topology evidence="1">Multi-pass membrane protein</topology>
    </subcellularLocation>
</comment>
<comment type="similarity">
    <text evidence="1">Belongs to the Lgt family.</text>
</comment>
<keyword id="KW-0997">Cell inner membrane</keyword>
<keyword id="KW-1003">Cell membrane</keyword>
<keyword id="KW-0472">Membrane</keyword>
<keyword id="KW-0808">Transferase</keyword>
<keyword id="KW-0812">Transmembrane</keyword>
<keyword id="KW-1133">Transmembrane helix</keyword>
<dbReference type="EC" id="2.5.1.145" evidence="1"/>
<dbReference type="EMBL" id="CP000901">
    <property type="protein sequence ID" value="ABX85808.1"/>
    <property type="molecule type" value="Genomic_DNA"/>
</dbReference>
<dbReference type="RefSeq" id="WP_002211383.1">
    <property type="nucleotide sequence ID" value="NZ_CP009935.1"/>
</dbReference>
<dbReference type="SMR" id="A9R2R4"/>
<dbReference type="GeneID" id="57973850"/>
<dbReference type="KEGG" id="ypg:YpAngola_A3239"/>
<dbReference type="PATRIC" id="fig|349746.12.peg.4303"/>
<dbReference type="UniPathway" id="UPA00664"/>
<dbReference type="GO" id="GO:0005886">
    <property type="term" value="C:plasma membrane"/>
    <property type="evidence" value="ECO:0007669"/>
    <property type="project" value="UniProtKB-SubCell"/>
</dbReference>
<dbReference type="GO" id="GO:0008961">
    <property type="term" value="F:phosphatidylglycerol-prolipoprotein diacylglyceryl transferase activity"/>
    <property type="evidence" value="ECO:0007669"/>
    <property type="project" value="UniProtKB-UniRule"/>
</dbReference>
<dbReference type="GO" id="GO:0042158">
    <property type="term" value="P:lipoprotein biosynthetic process"/>
    <property type="evidence" value="ECO:0007669"/>
    <property type="project" value="UniProtKB-UniRule"/>
</dbReference>
<dbReference type="HAMAP" id="MF_01147">
    <property type="entry name" value="Lgt"/>
    <property type="match status" value="1"/>
</dbReference>
<dbReference type="InterPro" id="IPR001640">
    <property type="entry name" value="Lgt"/>
</dbReference>
<dbReference type="NCBIfam" id="TIGR00544">
    <property type="entry name" value="lgt"/>
    <property type="match status" value="1"/>
</dbReference>
<dbReference type="PANTHER" id="PTHR30589:SF0">
    <property type="entry name" value="PHOSPHATIDYLGLYCEROL--PROLIPOPROTEIN DIACYLGLYCERYL TRANSFERASE"/>
    <property type="match status" value="1"/>
</dbReference>
<dbReference type="PANTHER" id="PTHR30589">
    <property type="entry name" value="PROLIPOPROTEIN DIACYLGLYCERYL TRANSFERASE"/>
    <property type="match status" value="1"/>
</dbReference>
<dbReference type="Pfam" id="PF01790">
    <property type="entry name" value="LGT"/>
    <property type="match status" value="1"/>
</dbReference>
<dbReference type="PROSITE" id="PS01311">
    <property type="entry name" value="LGT"/>
    <property type="match status" value="1"/>
</dbReference>
<gene>
    <name evidence="1" type="primary">lgt</name>
    <name type="ordered locus">YpAngola_A3239</name>
</gene>
<name>LGT_YERPG</name>